<reference key="1">
    <citation type="journal article" date="1987" name="Virology">
        <title>Tumorigenic poxviruses: genomic organization and DNA sequence of the telomeric region of the Shope fibroma virus genome.</title>
        <authorList>
            <person name="Upton C."/>
            <person name="Delange A.M."/>
            <person name="McFadden G."/>
        </authorList>
    </citation>
    <scope>NUCLEOTIDE SEQUENCE [GENOMIC DNA]</scope>
</reference>
<reference key="2">
    <citation type="journal article" date="1999" name="Virology">
        <title>The complete genome sequence of shope (Rabbit) fibroma virus.</title>
        <authorList>
            <person name="Willer D.O."/>
            <person name="McFadden G."/>
            <person name="Evans D.H."/>
        </authorList>
    </citation>
    <scope>NUCLEOTIDE SEQUENCE [LARGE SCALE GENOMIC DNA]</scope>
</reference>
<protein>
    <recommendedName>
        <fullName>Protein T1</fullName>
    </recommendedName>
</protein>
<organism>
    <name type="scientific">Rabbit fibroma virus (strain Kasza)</name>
    <name type="common">RFV</name>
    <name type="synonym">Shope fibroma virus (strain Kasza)</name>
    <dbReference type="NCBI Taxonomy" id="10272"/>
    <lineage>
        <taxon>Viruses</taxon>
        <taxon>Varidnaviria</taxon>
        <taxon>Bamfordvirae</taxon>
        <taxon>Nucleocytoviricota</taxon>
        <taxon>Pokkesviricetes</taxon>
        <taxon>Chitovirales</taxon>
        <taxon>Poxviridae</taxon>
        <taxon>Chordopoxvirinae</taxon>
        <taxon>Leporipoxvirus</taxon>
        <taxon>Rabbit fibroma virus</taxon>
    </lineage>
</organism>
<comment type="similarity">
    <text evidence="2">Belongs to the poxviruses A41 family.</text>
</comment>
<keyword id="KW-0325">Glycoprotein</keyword>
<keyword id="KW-1185">Reference proteome</keyword>
<keyword id="KW-0732">Signal</keyword>
<dbReference type="EMBL" id="M17433">
    <property type="status" value="NOT_ANNOTATED_CDS"/>
    <property type="molecule type" value="Genomic_DNA"/>
</dbReference>
<dbReference type="EMBL" id="AF170722">
    <property type="protein sequence ID" value="AAF17883.1"/>
    <property type="molecule type" value="Genomic_DNA"/>
</dbReference>
<dbReference type="EMBL" id="AF170722">
    <property type="protein sequence ID" value="AAF18044.1"/>
    <property type="molecule type" value="Genomic_DNA"/>
</dbReference>
<dbReference type="PIR" id="A43692">
    <property type="entry name" value="A43692"/>
</dbReference>
<dbReference type="RefSeq" id="NP_051886.1">
    <property type="nucleotide sequence ID" value="NC_001266.1"/>
</dbReference>
<dbReference type="RefSeq" id="NP_052050.1">
    <property type="nucleotide sequence ID" value="NC_001266.1"/>
</dbReference>
<dbReference type="SMR" id="P25946"/>
<dbReference type="KEGG" id="vg:1486844"/>
<dbReference type="KEGG" id="vg:1487005"/>
<dbReference type="Proteomes" id="UP000000868">
    <property type="component" value="Segment"/>
</dbReference>
<dbReference type="Gene3D" id="2.60.240.10">
    <property type="entry name" value="Major secreted virus protein"/>
    <property type="match status" value="1"/>
</dbReference>
<dbReference type="InterPro" id="IPR009173">
    <property type="entry name" value="Chemkine-bd_vir"/>
</dbReference>
<dbReference type="InterPro" id="IPR003184">
    <property type="entry name" value="Orthopox_35kDa"/>
</dbReference>
<dbReference type="InterPro" id="IPR036540">
    <property type="entry name" value="Pox_vCCI-like_sf"/>
</dbReference>
<dbReference type="Pfam" id="PF02250">
    <property type="entry name" value="Orthopox_35kD"/>
    <property type="match status" value="1"/>
</dbReference>
<dbReference type="PIRSF" id="PIRSF003696">
    <property type="entry name" value="VAC_C23L"/>
    <property type="match status" value="1"/>
</dbReference>
<dbReference type="SUPFAM" id="SSF49889">
    <property type="entry name" value="Soluble secreted chemokine inhibitor, VCCI"/>
    <property type="match status" value="1"/>
</dbReference>
<sequence length="258" mass="28437">MRRLCIILLVYVYATFATKGICKQDEDVRYMGIDVVVKVTKKTSGSDTVCQALRTTFEAAHKGDGANDSLSTEYVDDYSEEEEYEYDESFLEGFVIGSTYYTIVGGGLSVTFGFTGCPTVKSVSEYAKGRIVFIRLSSDAPWRDTNPMSINRTEALALLEKCETSIDIKCSNETVSETTYGLASLAPHITQATERGNIIGSTLVDTDCVENLDVTVHLGEMCRKTSDLSKRDSLKVKNGELLDDDTFSIHTPKLKACN</sequence>
<gene>
    <name type="ordered locus">s001R</name>
    <name type="ORF">T1a</name>
</gene>
<gene>
    <name type="ordered locus">s001L</name>
    <name type="ORF">T1b</name>
</gene>
<proteinExistence type="inferred from homology"/>
<name>VT1_RFVKA</name>
<organismHost>
    <name type="scientific">Oryctolagus cuniculus</name>
    <name type="common">Rabbit</name>
    <dbReference type="NCBI Taxonomy" id="9986"/>
</organismHost>
<evidence type="ECO:0000255" key="1"/>
<evidence type="ECO:0000305" key="2"/>
<accession>P25946</accession>
<accession>Q77PB2</accession>
<feature type="signal peptide" evidence="1">
    <location>
        <begin position="1"/>
        <end position="17"/>
    </location>
</feature>
<feature type="chain" id="PRO_0000040605" description="Protein T1">
    <location>
        <begin position="18"/>
        <end position="258"/>
    </location>
</feature>
<feature type="glycosylation site" description="N-linked (GlcNAc...) asparagine; by host" evidence="1">
    <location>
        <position position="67"/>
    </location>
</feature>
<feature type="glycosylation site" description="N-linked (GlcNAc...) asparagine; by host" evidence="1">
    <location>
        <position position="151"/>
    </location>
</feature>
<feature type="glycosylation site" description="N-linked (GlcNAc...) asparagine; by host" evidence="1">
    <location>
        <position position="172"/>
    </location>
</feature>